<reference key="1">
    <citation type="journal article" date="2008" name="Genome Res.">
        <title>The genome of Pelotomaculum thermopropionicum reveals niche-associated evolution in anaerobic microbiota.</title>
        <authorList>
            <person name="Kosaka T."/>
            <person name="Kato S."/>
            <person name="Shimoyama T."/>
            <person name="Ishii S."/>
            <person name="Abe T."/>
            <person name="Watanabe K."/>
        </authorList>
    </citation>
    <scope>NUCLEOTIDE SEQUENCE [LARGE SCALE GENOMIC DNA]</scope>
    <source>
        <strain>DSM 13744 / JCM 10971 / SI</strain>
    </source>
</reference>
<sequence length="427" mass="44760">MKLLIKGGTVVDPVAGKIEEKDVFIVDGKIARAGAHVNTAGAEVLDASGKLVVPGLIDMHVHLREPGFEARETIYTGTRAAARGGFTSVACMPNTSPVADNGAVISFIKACGLKGAVNVYPIGAITRGSKGEELAEMGDMKEAGAVAFSDDGMPVMNAGLMRRALQYAGMLGMVVISHCEDKNLSAGGVMHEGYVSTMLGLKGIPASAEEVMVARDILLAEETGSRVHIAHVSTAGSVRLIREAKARGVRVTAEVAPHHFTLTDEAVLGYDTSTKVNPPLRSAGDVAAVREGLADGTIDVIATDHAPHTEEEKDVEYDLAPFGMVGLETAVGLVWTELVAAGVLTPLQAVVKMTLNPARVLGIPKGTLEPGADADITIIDPDLSEPVDPARFASKGRNTPFRGRLLKGLPWATIVGGRVVMQDRVIR</sequence>
<evidence type="ECO:0000255" key="1">
    <source>
        <dbReference type="HAMAP-Rule" id="MF_00220"/>
    </source>
</evidence>
<comment type="function">
    <text evidence="1">Catalyzes the reversible cyclization of carbamoyl aspartate to dihydroorotate.</text>
</comment>
<comment type="catalytic activity">
    <reaction evidence="1">
        <text>(S)-dihydroorotate + H2O = N-carbamoyl-L-aspartate + H(+)</text>
        <dbReference type="Rhea" id="RHEA:24296"/>
        <dbReference type="ChEBI" id="CHEBI:15377"/>
        <dbReference type="ChEBI" id="CHEBI:15378"/>
        <dbReference type="ChEBI" id="CHEBI:30864"/>
        <dbReference type="ChEBI" id="CHEBI:32814"/>
        <dbReference type="EC" id="3.5.2.3"/>
    </reaction>
</comment>
<comment type="cofactor">
    <cofactor evidence="1">
        <name>Zn(2+)</name>
        <dbReference type="ChEBI" id="CHEBI:29105"/>
    </cofactor>
    <text evidence="1">Binds 2 Zn(2+) ions per subunit.</text>
</comment>
<comment type="pathway">
    <text evidence="1">Pyrimidine metabolism; UMP biosynthesis via de novo pathway; (S)-dihydroorotate from bicarbonate: step 3/3.</text>
</comment>
<comment type="similarity">
    <text evidence="1">Belongs to the metallo-dependent hydrolases superfamily. DHOase family. Class I DHOase subfamily.</text>
</comment>
<accession>A5D1A4</accession>
<dbReference type="EC" id="3.5.2.3" evidence="1"/>
<dbReference type="EMBL" id="AP009389">
    <property type="protein sequence ID" value="BAF59992.1"/>
    <property type="molecule type" value="Genomic_DNA"/>
</dbReference>
<dbReference type="SMR" id="A5D1A4"/>
<dbReference type="STRING" id="370438.PTH_1811"/>
<dbReference type="KEGG" id="pth:PTH_1811"/>
<dbReference type="eggNOG" id="COG0044">
    <property type="taxonomic scope" value="Bacteria"/>
</dbReference>
<dbReference type="HOGENOM" id="CLU_015572_1_0_9"/>
<dbReference type="UniPathway" id="UPA00070">
    <property type="reaction ID" value="UER00117"/>
</dbReference>
<dbReference type="Proteomes" id="UP000006556">
    <property type="component" value="Chromosome"/>
</dbReference>
<dbReference type="GO" id="GO:0005737">
    <property type="term" value="C:cytoplasm"/>
    <property type="evidence" value="ECO:0007669"/>
    <property type="project" value="TreeGrafter"/>
</dbReference>
<dbReference type="GO" id="GO:0004038">
    <property type="term" value="F:allantoinase activity"/>
    <property type="evidence" value="ECO:0007669"/>
    <property type="project" value="TreeGrafter"/>
</dbReference>
<dbReference type="GO" id="GO:0004151">
    <property type="term" value="F:dihydroorotase activity"/>
    <property type="evidence" value="ECO:0007669"/>
    <property type="project" value="UniProtKB-UniRule"/>
</dbReference>
<dbReference type="GO" id="GO:0008270">
    <property type="term" value="F:zinc ion binding"/>
    <property type="evidence" value="ECO:0007669"/>
    <property type="project" value="UniProtKB-UniRule"/>
</dbReference>
<dbReference type="GO" id="GO:0044205">
    <property type="term" value="P:'de novo' UMP biosynthetic process"/>
    <property type="evidence" value="ECO:0007669"/>
    <property type="project" value="UniProtKB-UniRule"/>
</dbReference>
<dbReference type="GO" id="GO:0006145">
    <property type="term" value="P:purine nucleobase catabolic process"/>
    <property type="evidence" value="ECO:0007669"/>
    <property type="project" value="TreeGrafter"/>
</dbReference>
<dbReference type="CDD" id="cd01317">
    <property type="entry name" value="DHOase_IIa"/>
    <property type="match status" value="1"/>
</dbReference>
<dbReference type="Gene3D" id="3.20.20.140">
    <property type="entry name" value="Metal-dependent hydrolases"/>
    <property type="match status" value="1"/>
</dbReference>
<dbReference type="Gene3D" id="2.30.40.10">
    <property type="entry name" value="Urease, subunit C, domain 1"/>
    <property type="match status" value="1"/>
</dbReference>
<dbReference type="HAMAP" id="MF_00220_B">
    <property type="entry name" value="PyrC_classI_B"/>
    <property type="match status" value="1"/>
</dbReference>
<dbReference type="InterPro" id="IPR006680">
    <property type="entry name" value="Amidohydro-rel"/>
</dbReference>
<dbReference type="InterPro" id="IPR004722">
    <property type="entry name" value="DHOase"/>
</dbReference>
<dbReference type="InterPro" id="IPR050138">
    <property type="entry name" value="DHOase/Allantoinase_Hydrolase"/>
</dbReference>
<dbReference type="InterPro" id="IPR002195">
    <property type="entry name" value="Dihydroorotase_CS"/>
</dbReference>
<dbReference type="InterPro" id="IPR011059">
    <property type="entry name" value="Metal-dep_hydrolase_composite"/>
</dbReference>
<dbReference type="InterPro" id="IPR032466">
    <property type="entry name" value="Metal_Hydrolase"/>
</dbReference>
<dbReference type="NCBIfam" id="TIGR00857">
    <property type="entry name" value="pyrC_multi"/>
    <property type="match status" value="1"/>
</dbReference>
<dbReference type="PANTHER" id="PTHR43668">
    <property type="entry name" value="ALLANTOINASE"/>
    <property type="match status" value="1"/>
</dbReference>
<dbReference type="PANTHER" id="PTHR43668:SF2">
    <property type="entry name" value="ALLANTOINASE"/>
    <property type="match status" value="1"/>
</dbReference>
<dbReference type="Pfam" id="PF01979">
    <property type="entry name" value="Amidohydro_1"/>
    <property type="match status" value="1"/>
</dbReference>
<dbReference type="SUPFAM" id="SSF51338">
    <property type="entry name" value="Composite domain of metallo-dependent hydrolases"/>
    <property type="match status" value="1"/>
</dbReference>
<dbReference type="SUPFAM" id="SSF51556">
    <property type="entry name" value="Metallo-dependent hydrolases"/>
    <property type="match status" value="1"/>
</dbReference>
<dbReference type="PROSITE" id="PS00482">
    <property type="entry name" value="DIHYDROOROTASE_1"/>
    <property type="match status" value="1"/>
</dbReference>
<dbReference type="PROSITE" id="PS00483">
    <property type="entry name" value="DIHYDROOROTASE_2"/>
    <property type="match status" value="1"/>
</dbReference>
<feature type="chain" id="PRO_1000078108" description="Dihydroorotase">
    <location>
        <begin position="1"/>
        <end position="427"/>
    </location>
</feature>
<feature type="active site" evidence="1">
    <location>
        <position position="304"/>
    </location>
</feature>
<feature type="binding site" evidence="1">
    <location>
        <position position="60"/>
    </location>
    <ligand>
        <name>Zn(2+)</name>
        <dbReference type="ChEBI" id="CHEBI:29105"/>
        <label>1</label>
    </ligand>
</feature>
<feature type="binding site" evidence="1">
    <location>
        <begin position="62"/>
        <end position="64"/>
    </location>
    <ligand>
        <name>substrate</name>
    </ligand>
</feature>
<feature type="binding site" evidence="1">
    <location>
        <position position="62"/>
    </location>
    <ligand>
        <name>Zn(2+)</name>
        <dbReference type="ChEBI" id="CHEBI:29105"/>
        <label>1</label>
    </ligand>
</feature>
<feature type="binding site" evidence="1">
    <location>
        <position position="94"/>
    </location>
    <ligand>
        <name>substrate</name>
    </ligand>
</feature>
<feature type="binding site" evidence="1">
    <location>
        <position position="151"/>
    </location>
    <ligand>
        <name>Zn(2+)</name>
        <dbReference type="ChEBI" id="CHEBI:29105"/>
        <label>1</label>
    </ligand>
</feature>
<feature type="binding site" evidence="1">
    <location>
        <position position="151"/>
    </location>
    <ligand>
        <name>Zn(2+)</name>
        <dbReference type="ChEBI" id="CHEBI:29105"/>
        <label>2</label>
    </ligand>
</feature>
<feature type="binding site" evidence="1">
    <location>
        <position position="178"/>
    </location>
    <ligand>
        <name>Zn(2+)</name>
        <dbReference type="ChEBI" id="CHEBI:29105"/>
        <label>2</label>
    </ligand>
</feature>
<feature type="binding site" evidence="1">
    <location>
        <position position="231"/>
    </location>
    <ligand>
        <name>Zn(2+)</name>
        <dbReference type="ChEBI" id="CHEBI:29105"/>
        <label>2</label>
    </ligand>
</feature>
<feature type="binding site" evidence="1">
    <location>
        <position position="277"/>
    </location>
    <ligand>
        <name>substrate</name>
    </ligand>
</feature>
<feature type="binding site" evidence="1">
    <location>
        <position position="304"/>
    </location>
    <ligand>
        <name>Zn(2+)</name>
        <dbReference type="ChEBI" id="CHEBI:29105"/>
        <label>1</label>
    </ligand>
</feature>
<feature type="binding site" evidence="1">
    <location>
        <position position="308"/>
    </location>
    <ligand>
        <name>substrate</name>
    </ligand>
</feature>
<feature type="binding site" evidence="1">
    <location>
        <begin position="322"/>
        <end position="323"/>
    </location>
    <ligand>
        <name>substrate</name>
    </ligand>
</feature>
<gene>
    <name evidence="1" type="primary">pyrC</name>
    <name type="ordered locus">PTH_1811</name>
</gene>
<keyword id="KW-0378">Hydrolase</keyword>
<keyword id="KW-0479">Metal-binding</keyword>
<keyword id="KW-0665">Pyrimidine biosynthesis</keyword>
<keyword id="KW-1185">Reference proteome</keyword>
<keyword id="KW-0862">Zinc</keyword>
<protein>
    <recommendedName>
        <fullName evidence="1">Dihydroorotase</fullName>
        <shortName evidence="1">DHOase</shortName>
        <ecNumber evidence="1">3.5.2.3</ecNumber>
    </recommendedName>
</protein>
<organism>
    <name type="scientific">Pelotomaculum thermopropionicum (strain DSM 13744 / JCM 10971 / SI)</name>
    <dbReference type="NCBI Taxonomy" id="370438"/>
    <lineage>
        <taxon>Bacteria</taxon>
        <taxon>Bacillati</taxon>
        <taxon>Bacillota</taxon>
        <taxon>Clostridia</taxon>
        <taxon>Eubacteriales</taxon>
        <taxon>Desulfotomaculaceae</taxon>
        <taxon>Pelotomaculum</taxon>
    </lineage>
</organism>
<proteinExistence type="inferred from homology"/>
<name>PYRC_PELTS</name>